<evidence type="ECO:0000250" key="1"/>
<evidence type="ECO:0000255" key="2"/>
<evidence type="ECO:0000305" key="3"/>
<proteinExistence type="inferred from homology"/>
<protein>
    <recommendedName>
        <fullName>Cytochrome c oxidase subunit 1</fullName>
        <ecNumber>7.1.1.9</ecNumber>
    </recommendedName>
    <alternativeName>
        <fullName>Cytochrome aa3 subunit 1</fullName>
    </alternativeName>
    <alternativeName>
        <fullName>Cytochrome c oxidase polypeptide I</fullName>
    </alternativeName>
    <alternativeName>
        <fullName>Oxidase aa(3) subunit 1</fullName>
    </alternativeName>
</protein>
<feature type="chain" id="PRO_0000183460" description="Cytochrome c oxidase subunit 1">
    <location>
        <begin position="1"/>
        <end position="552"/>
    </location>
</feature>
<feature type="transmembrane region" description="Helical" evidence="2">
    <location>
        <begin position="35"/>
        <end position="55"/>
    </location>
</feature>
<feature type="transmembrane region" description="Helical" evidence="2">
    <location>
        <begin position="85"/>
        <end position="105"/>
    </location>
</feature>
<feature type="transmembrane region" description="Helical" evidence="2">
    <location>
        <begin position="120"/>
        <end position="140"/>
    </location>
</feature>
<feature type="transmembrane region" description="Helical" evidence="2">
    <location>
        <begin position="164"/>
        <end position="184"/>
    </location>
</feature>
<feature type="transmembrane region" description="Helical" evidence="2">
    <location>
        <begin position="211"/>
        <end position="231"/>
    </location>
</feature>
<feature type="transmembrane region" description="Helical" evidence="2">
    <location>
        <begin position="252"/>
        <end position="272"/>
    </location>
</feature>
<feature type="transmembrane region" description="Helical" evidence="2">
    <location>
        <begin position="284"/>
        <end position="304"/>
    </location>
</feature>
<feature type="transmembrane region" description="Helical" evidence="2">
    <location>
        <begin position="321"/>
        <end position="341"/>
    </location>
</feature>
<feature type="transmembrane region" description="Helical" evidence="2">
    <location>
        <begin position="355"/>
        <end position="375"/>
    </location>
</feature>
<feature type="transmembrane region" description="Helical" evidence="2">
    <location>
        <begin position="390"/>
        <end position="410"/>
    </location>
</feature>
<feature type="transmembrane region" description="Helical" evidence="2">
    <location>
        <begin position="426"/>
        <end position="446"/>
    </location>
</feature>
<feature type="transmembrane region" description="Helical" evidence="2">
    <location>
        <begin position="470"/>
        <end position="490"/>
    </location>
</feature>
<feature type="binding site" description="axial binding residue" evidence="3">
    <location>
        <position position="82"/>
    </location>
    <ligand>
        <name>Fe(II)-heme a</name>
        <dbReference type="ChEBI" id="CHEBI:61715"/>
    </ligand>
    <ligandPart>
        <name>Fe</name>
        <dbReference type="ChEBI" id="CHEBI:18248"/>
    </ligandPart>
</feature>
<feature type="binding site" evidence="3">
    <location>
        <position position="258"/>
    </location>
    <ligand>
        <name>Cu cation</name>
        <dbReference type="ChEBI" id="CHEBI:23378"/>
        <label>B</label>
    </ligand>
</feature>
<feature type="binding site" evidence="3">
    <location>
        <position position="262"/>
    </location>
    <ligand>
        <name>Cu cation</name>
        <dbReference type="ChEBI" id="CHEBI:23378"/>
        <label>B</label>
    </ligand>
</feature>
<feature type="binding site" evidence="3">
    <location>
        <position position="307"/>
    </location>
    <ligand>
        <name>Cu cation</name>
        <dbReference type="ChEBI" id="CHEBI:23378"/>
        <label>B</label>
    </ligand>
</feature>
<feature type="binding site" evidence="3">
    <location>
        <position position="308"/>
    </location>
    <ligand>
        <name>Cu cation</name>
        <dbReference type="ChEBI" id="CHEBI:23378"/>
        <label>B</label>
    </ligand>
</feature>
<feature type="binding site" description="axial binding residue" evidence="3">
    <location>
        <position position="393"/>
    </location>
    <ligand>
        <name>heme a3</name>
        <dbReference type="ChEBI" id="CHEBI:83282"/>
    </ligand>
    <ligandPart>
        <name>Fe</name>
        <dbReference type="ChEBI" id="CHEBI:18248"/>
    </ligandPart>
</feature>
<feature type="binding site" description="axial binding residue" evidence="3">
    <location>
        <position position="395"/>
    </location>
    <ligand>
        <name>Fe(II)-heme a</name>
        <dbReference type="ChEBI" id="CHEBI:61715"/>
    </ligand>
    <ligandPart>
        <name>Fe</name>
        <dbReference type="ChEBI" id="CHEBI:18248"/>
    </ligandPart>
</feature>
<feature type="cross-link" description="1'-histidyl-3'-tyrosine (His-Tyr)" evidence="1">
    <location>
        <begin position="258"/>
        <end position="262"/>
    </location>
</feature>
<keyword id="KW-1003">Cell membrane</keyword>
<keyword id="KW-0186">Copper</keyword>
<keyword id="KW-0249">Electron transport</keyword>
<keyword id="KW-0349">Heme</keyword>
<keyword id="KW-0408">Iron</keyword>
<keyword id="KW-0472">Membrane</keyword>
<keyword id="KW-0479">Metal-binding</keyword>
<keyword id="KW-0679">Respiratory chain</keyword>
<keyword id="KW-1278">Translocase</keyword>
<keyword id="KW-0812">Transmembrane</keyword>
<keyword id="KW-1133">Transmembrane helix</keyword>
<keyword id="KW-0813">Transport</keyword>
<gene>
    <name type="primary">ctaD</name>
</gene>
<name>COX1_THEVL</name>
<comment type="function">
    <text>Cytochrome c oxidase is the component of the respiratory chain that catalyzes the reduction of oxygen to water. Subunits 1-3 form the functional core of the enzyme complex. CO I is the catalytic subunit of the enzyme. Electrons originating in cytochrome c are transferred via the copper A center of subunit 2 and heme A of subunit 1 to the bimetallic center formed by heme A3 and copper B.</text>
</comment>
<comment type="catalytic activity">
    <reaction>
        <text>4 Fe(II)-[cytochrome c] + O2 + 8 H(+)(in) = 4 Fe(III)-[cytochrome c] + 2 H2O + 4 H(+)(out)</text>
        <dbReference type="Rhea" id="RHEA:11436"/>
        <dbReference type="Rhea" id="RHEA-COMP:10350"/>
        <dbReference type="Rhea" id="RHEA-COMP:14399"/>
        <dbReference type="ChEBI" id="CHEBI:15377"/>
        <dbReference type="ChEBI" id="CHEBI:15378"/>
        <dbReference type="ChEBI" id="CHEBI:15379"/>
        <dbReference type="ChEBI" id="CHEBI:29033"/>
        <dbReference type="ChEBI" id="CHEBI:29034"/>
        <dbReference type="EC" id="7.1.1.9"/>
    </reaction>
</comment>
<comment type="cofactor">
    <cofactor>
        <name>Cu(2+)</name>
        <dbReference type="ChEBI" id="CHEBI:29036"/>
    </cofactor>
    <text>Binds 1 copper B ion per subunit.</text>
</comment>
<comment type="cofactor">
    <cofactor>
        <name>heme</name>
        <dbReference type="ChEBI" id="CHEBI:30413"/>
    </cofactor>
    <text>Binds 2 heme groups per subunit.</text>
</comment>
<comment type="pathway">
    <text>Energy metabolism; oxidative phosphorylation.</text>
</comment>
<comment type="subcellular location">
    <subcellularLocation>
        <location>Cell membrane</location>
        <topology>Multi-pass membrane protein</topology>
    </subcellularLocation>
</comment>
<comment type="similarity">
    <text evidence="3">Belongs to the heme-copper respiratory oxidase family.</text>
</comment>
<reference key="1">
    <citation type="journal article" date="1993" name="Biochim. Biophys. Acta">
        <title>The genes in the thermophilic cyanobacterium Synechococcus vulcanus encoding cytochrome-c oxidase.</title>
        <authorList>
            <person name="Sone N."/>
            <person name="Tano H."/>
            <person name="Ishizuka M."/>
        </authorList>
    </citation>
    <scope>NUCLEOTIDE SEQUENCE [GENOMIC DNA]</scope>
</reference>
<dbReference type="EC" id="7.1.1.9"/>
<dbReference type="EMBL" id="D16254">
    <property type="protein sequence ID" value="BAA41041.1"/>
    <property type="molecule type" value="Genomic_DNA"/>
</dbReference>
<dbReference type="SMR" id="P50676"/>
<dbReference type="UniPathway" id="UPA00705"/>
<dbReference type="GO" id="GO:0005886">
    <property type="term" value="C:plasma membrane"/>
    <property type="evidence" value="ECO:0007669"/>
    <property type="project" value="UniProtKB-SubCell"/>
</dbReference>
<dbReference type="GO" id="GO:0004129">
    <property type="term" value="F:cytochrome-c oxidase activity"/>
    <property type="evidence" value="ECO:0007669"/>
    <property type="project" value="UniProtKB-EC"/>
</dbReference>
<dbReference type="GO" id="GO:0020037">
    <property type="term" value="F:heme binding"/>
    <property type="evidence" value="ECO:0007669"/>
    <property type="project" value="InterPro"/>
</dbReference>
<dbReference type="GO" id="GO:0046872">
    <property type="term" value="F:metal ion binding"/>
    <property type="evidence" value="ECO:0007669"/>
    <property type="project" value="UniProtKB-KW"/>
</dbReference>
<dbReference type="GO" id="GO:0015990">
    <property type="term" value="P:electron transport coupled proton transport"/>
    <property type="evidence" value="ECO:0007669"/>
    <property type="project" value="InterPro"/>
</dbReference>
<dbReference type="GO" id="GO:0006119">
    <property type="term" value="P:oxidative phosphorylation"/>
    <property type="evidence" value="ECO:0007669"/>
    <property type="project" value="UniProtKB-UniPathway"/>
</dbReference>
<dbReference type="GO" id="GO:0022904">
    <property type="term" value="P:respiratory electron transport chain"/>
    <property type="evidence" value="ECO:0007669"/>
    <property type="project" value="TreeGrafter"/>
</dbReference>
<dbReference type="FunFam" id="1.20.210.10:FF:000004">
    <property type="entry name" value="Cytochrome c oxidase subunit 1"/>
    <property type="match status" value="1"/>
</dbReference>
<dbReference type="Gene3D" id="1.20.210.10">
    <property type="entry name" value="Cytochrome c oxidase-like, subunit I domain"/>
    <property type="match status" value="1"/>
</dbReference>
<dbReference type="InterPro" id="IPR023616">
    <property type="entry name" value="Cyt_c_oxase-like_su1_dom"/>
</dbReference>
<dbReference type="InterPro" id="IPR036927">
    <property type="entry name" value="Cyt_c_oxase-like_su1_sf"/>
</dbReference>
<dbReference type="InterPro" id="IPR000883">
    <property type="entry name" value="Cyt_C_Oxase_1"/>
</dbReference>
<dbReference type="InterPro" id="IPR023615">
    <property type="entry name" value="Cyt_c_Oxase_su1_BS"/>
</dbReference>
<dbReference type="InterPro" id="IPR014241">
    <property type="entry name" value="Cyt_c_oxidase_su1_bac"/>
</dbReference>
<dbReference type="NCBIfam" id="TIGR02891">
    <property type="entry name" value="CtaD_CoxA"/>
    <property type="match status" value="1"/>
</dbReference>
<dbReference type="PANTHER" id="PTHR10422">
    <property type="entry name" value="CYTOCHROME C OXIDASE SUBUNIT 1"/>
    <property type="match status" value="1"/>
</dbReference>
<dbReference type="PANTHER" id="PTHR10422:SF18">
    <property type="entry name" value="CYTOCHROME C OXIDASE SUBUNIT 1"/>
    <property type="match status" value="1"/>
</dbReference>
<dbReference type="Pfam" id="PF00115">
    <property type="entry name" value="COX1"/>
    <property type="match status" value="1"/>
</dbReference>
<dbReference type="PRINTS" id="PR01165">
    <property type="entry name" value="CYCOXIDASEI"/>
</dbReference>
<dbReference type="SUPFAM" id="SSF81442">
    <property type="entry name" value="Cytochrome c oxidase subunit I-like"/>
    <property type="match status" value="1"/>
</dbReference>
<dbReference type="PROSITE" id="PS50855">
    <property type="entry name" value="COX1"/>
    <property type="match status" value="1"/>
</dbReference>
<dbReference type="PROSITE" id="PS00077">
    <property type="entry name" value="COX1_CUB"/>
    <property type="match status" value="1"/>
</dbReference>
<sequence>MAQAQLPLDTPLSLPEHPKAWKWYDYFTFNVDHKVIGIQYLVTAFIFYLIGGLMAVAMRTELATADSDFLDPNLYNAFLTNHGTIMIFLWVVPAAIGGFGNYLVPLMIGARDMAFPRLNALAFWLNPPAGALLLASFLFGGAQAGWTSYPPLSTITATTAQSMWILAIILVGTSSILGSVNFIVTIWKMKVPSMRWNQLPLFCWAMLATSLLALVSTPVLAAGLILLLFDINFGTSFYKPDAGGNVVIYQHLFWFYSHPAVYLMILPIFGIMSEVIPVHARKPIFGYQAIAYSSLAICCVGLFVWVHHMFTSGTPPWMRMFFTISTLIVAVPTGVKIFSWVATLWGGKIRLNSAMLFAIGLMSMFVLGGLSGVTLGTAPVDIHVHDTYYVVAHFHYVLFGGSVFGLYAGIYHWFPKMTGRLLDERLGILHFVLTLIGTNWTFLPMHELGLKGMPRRVAMYDPQFEPVNLICTIGAFVLAFSIIPFLINIIWSWNKGKIAGDNPWGGLTLEWTTSSPPLIENWEVLPVVTKGPYDYGIERRQESTDEDHDEQE</sequence>
<accession>P50676</accession>
<organism>
    <name type="scientific">Thermostichus vulcanus</name>
    <name type="common">Synechococcus vulcanus</name>
    <dbReference type="NCBI Taxonomy" id="32053"/>
    <lineage>
        <taxon>Bacteria</taxon>
        <taxon>Bacillati</taxon>
        <taxon>Cyanobacteriota</taxon>
        <taxon>Cyanophyceae</taxon>
        <taxon>Thermostichales</taxon>
        <taxon>Thermostichaceae</taxon>
        <taxon>Thermostichus</taxon>
    </lineage>
</organism>